<organism>
    <name type="scientific">Ovine maedi visna related virus (strain South Africa)</name>
    <name type="common">SA-OMVV</name>
    <name type="synonym">Ovine lentivirus</name>
    <dbReference type="NCBI Taxonomy" id="11664"/>
    <lineage>
        <taxon>Viruses</taxon>
        <taxon>Riboviria</taxon>
        <taxon>Pararnavirae</taxon>
        <taxon>Artverviricota</taxon>
        <taxon>Revtraviricetes</taxon>
        <taxon>Ortervirales</taxon>
        <taxon>Retroviridae</taxon>
        <taxon>Orthoretrovirinae</taxon>
        <taxon>Lentivirus</taxon>
        <taxon>Visna-maedi virus</taxon>
    </lineage>
</organism>
<dbReference type="EMBL" id="M34193">
    <property type="protein sequence ID" value="AAA46783.1"/>
    <property type="molecule type" value="Genomic_DNA"/>
</dbReference>
<dbReference type="EMBL" id="M31646">
    <property type="protein sequence ID" value="AAA66817.1"/>
    <property type="molecule type" value="Genomic_RNA"/>
</dbReference>
<dbReference type="RefSeq" id="NP_041253.1">
    <property type="nucleotide sequence ID" value="NC_001511.1"/>
</dbReference>
<dbReference type="GlyCosmos" id="P16899">
    <property type="glycosylation" value="27 sites, No reported glycans"/>
</dbReference>
<dbReference type="KEGG" id="vg:3978629"/>
<dbReference type="Proteomes" id="UP000243523">
    <property type="component" value="Segment"/>
</dbReference>
<dbReference type="GO" id="GO:0020002">
    <property type="term" value="C:host cell plasma membrane"/>
    <property type="evidence" value="ECO:0007669"/>
    <property type="project" value="UniProtKB-SubCell"/>
</dbReference>
<dbReference type="GO" id="GO:0016020">
    <property type="term" value="C:membrane"/>
    <property type="evidence" value="ECO:0007669"/>
    <property type="project" value="UniProtKB-KW"/>
</dbReference>
<dbReference type="GO" id="GO:0019031">
    <property type="term" value="C:viral envelope"/>
    <property type="evidence" value="ECO:0007669"/>
    <property type="project" value="UniProtKB-KW"/>
</dbReference>
<dbReference type="GO" id="GO:0055036">
    <property type="term" value="C:virion membrane"/>
    <property type="evidence" value="ECO:0007669"/>
    <property type="project" value="UniProtKB-SubCell"/>
</dbReference>
<dbReference type="GO" id="GO:0046718">
    <property type="term" value="P:symbiont entry into host cell"/>
    <property type="evidence" value="ECO:0007669"/>
    <property type="project" value="UniProtKB-KW"/>
</dbReference>
<dbReference type="GO" id="GO:0019062">
    <property type="term" value="P:virion attachment to host cell"/>
    <property type="evidence" value="ECO:0007669"/>
    <property type="project" value="UniProtKB-KW"/>
</dbReference>
<dbReference type="Gene3D" id="1.20.5.440">
    <property type="entry name" value="ATP synthase delta/epsilon subunit, C-terminal domain"/>
    <property type="match status" value="1"/>
</dbReference>
<dbReference type="SUPFAM" id="SSF58069">
    <property type="entry name" value="Virus ectodomain"/>
    <property type="match status" value="1"/>
</dbReference>
<evidence type="ECO:0000250" key="1"/>
<evidence type="ECO:0000255" key="2"/>
<evidence type="ECO:0000256" key="3">
    <source>
        <dbReference type="SAM" id="MobiDB-lite"/>
    </source>
</evidence>
<protein>
    <recommendedName>
        <fullName>Envelope glycoprotein gp160</fullName>
    </recommendedName>
    <alternativeName>
        <fullName>Env polyprotein</fullName>
    </alternativeName>
    <component>
        <recommendedName>
            <fullName>Surface protein</fullName>
        </recommendedName>
        <alternativeName>
            <fullName>Glycoprotein 135</fullName>
            <shortName>gp135</shortName>
        </alternativeName>
    </component>
    <component>
        <recommendedName>
            <fullName>Transmembrane protein</fullName>
        </recommendedName>
        <alternativeName>
            <fullName>Glycoprotein 46</fullName>
            <shortName>gp46</shortName>
        </alternativeName>
    </component>
</protein>
<keyword id="KW-0165">Cleavage on pair of basic residues</keyword>
<keyword id="KW-0175">Coiled coil</keyword>
<keyword id="KW-1015">Disulfide bond</keyword>
<keyword id="KW-0325">Glycoprotein</keyword>
<keyword id="KW-1032">Host cell membrane</keyword>
<keyword id="KW-1043">Host membrane</keyword>
<keyword id="KW-0945">Host-virus interaction</keyword>
<keyword id="KW-0449">Lipoprotein</keyword>
<keyword id="KW-0472">Membrane</keyword>
<keyword id="KW-0564">Palmitate</keyword>
<keyword id="KW-0732">Signal</keyword>
<keyword id="KW-0812">Transmembrane</keyword>
<keyword id="KW-1133">Transmembrane helix</keyword>
<keyword id="KW-1161">Viral attachment to host cell</keyword>
<keyword id="KW-0261">Viral envelope protein</keyword>
<keyword id="KW-0946">Virion</keyword>
<keyword id="KW-1160">Virus entry into host cell</keyword>
<reference key="1">
    <citation type="journal article" date="1990" name="Virology">
        <title>Nucleotide sequence analysis of SA-OMVV, a visna-related ovine lentivirus: phylogenetic history of lentiviruses.</title>
        <authorList>
            <person name="Querat G."/>
            <person name="Audoly G."/>
            <person name="Sonigo P."/>
            <person name="Vigne R."/>
        </authorList>
    </citation>
    <scope>NUCLEOTIDE SEQUENCE [GENOMIC DNA]</scope>
</reference>
<comment type="function">
    <text evidence="1">The surface protein (SU) attaches the virus to the host cell by binding to its receptor. This interaction triggers the refolding of the transmembrane protein (TM) and is thought to activate its fusogenic potential by unmasking its fusion peptide. Fusion occurs at the host cell plasma membrane (By similarity).</text>
</comment>
<comment type="function">
    <text evidence="1">The transmembrane protein (TM) acts as a class I viral fusion protein. Under the current model, the protein has at least 3 conformational states: pre-fusion native state, pre-hairpin intermediate state, and post-fusion hairpin state. During viral and target cell membrane fusion, the coiled coil regions (heptad repeats) assume a trimer-of-hairpins structure, positioning the fusion peptide in close proximity to the C-terminal region of the ectodomain. The formation of this structure appears to drive apposition and subsequent fusion of viral and target cell membranes. Membranes fusion leads to delivery of the nucleocapsid into the cytoplasm (By similarity).</text>
</comment>
<comment type="subunit">
    <text evidence="1">The mature envelope protein (Env) consists of a trimer of SU-TM heterodimers attached by noncovalent interactions or by a labile interchain disulfide bond.</text>
</comment>
<comment type="subcellular location">
    <molecule>Transmembrane protein</molecule>
    <subcellularLocation>
        <location evidence="1">Virion membrane</location>
        <topology evidence="1">Single-pass type I membrane protein</topology>
    </subcellularLocation>
    <subcellularLocation>
        <location evidence="1">Host cell membrane</location>
        <topology evidence="1">Single-pass type I membrane protein</topology>
    </subcellularLocation>
    <text evidence="1">It is probably concentrated at the site of budding and incorporated into the virions possibly by contacts between the cytoplasmic tail of Env and the N-terminus of Gag.</text>
</comment>
<comment type="subcellular location">
    <molecule>Surface protein</molecule>
    <subcellularLocation>
        <location evidence="1">Virion membrane</location>
        <topology evidence="1">Peripheral membrane protein</topology>
    </subcellularLocation>
    <subcellularLocation>
        <location evidence="1">Host cell membrane</location>
        <topology evidence="1">Peripheral membrane protein</topology>
    </subcellularLocation>
    <text evidence="1">The surface protein is not anchored to the viral envelope, but associates with the extravirion surface through its binding to TM. It is probably concentrated at the site of budding and incorporated into the virions possibly by contacts between the cytoplasmic tail of Env and the N-terminus of Gag (By similarity).</text>
</comment>
<comment type="PTM">
    <text evidence="1">Specific enzymatic cleavages in vivo yield mature proteins. Envelope glycoproteins are synthesized as an inactive precursor that is N-glycosylated and processed likely by host cell furin or by a furin-like protease in the Golgi to yield the mature SU and TM proteins. The cleavage site between SU and TM requires the minimal sequence [KR]-X-[KR]-R (By similarity).</text>
</comment>
<comment type="PTM">
    <text evidence="1">The transmembrane protein is palmitoylated.</text>
</comment>
<feature type="signal peptide" evidence="2">
    <location>
        <begin position="1"/>
        <end position="107"/>
    </location>
</feature>
<feature type="chain" id="PRO_0000239539" description="Envelope glycoprotein gp160">
    <location>
        <begin position="108"/>
        <end position="990"/>
    </location>
</feature>
<feature type="chain" id="PRO_0000038732" description="Surface protein" evidence="1">
    <location>
        <begin position="108"/>
        <end position="662"/>
    </location>
</feature>
<feature type="chain" id="PRO_0000038733" description="Transmembrane protein" evidence="1">
    <location>
        <begin position="663"/>
        <end position="990"/>
    </location>
</feature>
<feature type="topological domain" description="Extracellular" evidence="2">
    <location>
        <begin position="108"/>
        <end position="838"/>
    </location>
</feature>
<feature type="transmembrane region" description="Helical" evidence="2">
    <location>
        <begin position="839"/>
        <end position="859"/>
    </location>
</feature>
<feature type="topological domain" description="Cytoplasmic" evidence="2">
    <location>
        <begin position="860"/>
        <end position="990"/>
    </location>
</feature>
<feature type="region of interest" description="Fusion peptide" evidence="2">
    <location>
        <begin position="663"/>
        <end position="683"/>
    </location>
</feature>
<feature type="region of interest" description="Immunosuppression" evidence="1">
    <location>
        <begin position="729"/>
        <end position="745"/>
    </location>
</feature>
<feature type="region of interest" description="Disordered" evidence="3">
    <location>
        <begin position="890"/>
        <end position="909"/>
    </location>
</feature>
<feature type="coiled-coil region" evidence="2">
    <location>
        <begin position="695"/>
        <end position="745"/>
    </location>
</feature>
<feature type="coiled-coil region" evidence="2">
    <location>
        <begin position="786"/>
        <end position="821"/>
    </location>
</feature>
<feature type="site" description="Cleavage; by host" evidence="1">
    <location>
        <begin position="662"/>
        <end position="663"/>
    </location>
</feature>
<feature type="lipid moiety-binding region" description="S-palmitoyl cysteine; by host" evidence="1">
    <location>
        <position position="862"/>
    </location>
</feature>
<feature type="glycosylation site" description="N-linked (GlcNAc...) asparagine; by host" evidence="2">
    <location>
        <position position="141"/>
    </location>
</feature>
<feature type="glycosylation site" description="N-linked (GlcNAc...) asparagine; by host" evidence="2">
    <location>
        <position position="162"/>
    </location>
</feature>
<feature type="glycosylation site" description="N-linked (GlcNAc...) asparagine; by host" evidence="2">
    <location>
        <position position="207"/>
    </location>
</feature>
<feature type="glycosylation site" description="N-linked (GlcNAc...) asparagine; by host" evidence="2">
    <location>
        <position position="259"/>
    </location>
</feature>
<feature type="glycosylation site" description="N-linked (GlcNAc...) asparagine; by host" evidence="2">
    <location>
        <position position="299"/>
    </location>
</feature>
<feature type="glycosylation site" description="N-linked (GlcNAc...) asparagine; by host" evidence="2">
    <location>
        <position position="363"/>
    </location>
</feature>
<feature type="glycosylation site" description="N-linked (GlcNAc...) asparagine; by host" evidence="2">
    <location>
        <position position="386"/>
    </location>
</feature>
<feature type="glycosylation site" description="N-linked (GlcNAc...) asparagine; by host" evidence="2">
    <location>
        <position position="402"/>
    </location>
</feature>
<feature type="glycosylation site" description="N-linked (GlcNAc...) asparagine; by host" evidence="2">
    <location>
        <position position="413"/>
    </location>
</feature>
<feature type="glycosylation site" description="N-linked (GlcNAc...) asparagine; by host" evidence="2">
    <location>
        <position position="434"/>
    </location>
</feature>
<feature type="glycosylation site" description="N-linked (GlcNAc...) asparagine; by host" evidence="2">
    <location>
        <position position="438"/>
    </location>
</feature>
<feature type="glycosylation site" description="N-linked (GlcNAc...) asparagine; by host" evidence="2">
    <location>
        <position position="469"/>
    </location>
</feature>
<feature type="glycosylation site" description="N-linked (GlcNAc...) asparagine; by host" evidence="2">
    <location>
        <position position="474"/>
    </location>
</feature>
<feature type="glycosylation site" description="N-linked (GlcNAc...) asparagine; by host" evidence="2">
    <location>
        <position position="480"/>
    </location>
</feature>
<feature type="glycosylation site" description="N-linked (GlcNAc...) asparagine; by host" evidence="2">
    <location>
        <position position="490"/>
    </location>
</feature>
<feature type="glycosylation site" description="N-linked (GlcNAc...) asparagine; by host" evidence="2">
    <location>
        <position position="500"/>
    </location>
</feature>
<feature type="glycosylation site" description="N-linked (GlcNAc...) asparagine; by host" evidence="2">
    <location>
        <position position="514"/>
    </location>
</feature>
<feature type="glycosylation site" description="N-linked (GlcNAc...) asparagine; by host" evidence="2">
    <location>
        <position position="526"/>
    </location>
</feature>
<feature type="glycosylation site" description="N-linked (GlcNAc...) asparagine; by host" evidence="2">
    <location>
        <position position="536"/>
    </location>
</feature>
<feature type="glycosylation site" description="N-linked (GlcNAc...) asparagine; by host" evidence="2">
    <location>
        <position position="542"/>
    </location>
</feature>
<feature type="glycosylation site" description="N-linked (GlcNAc...) asparagine; by host" evidence="2">
    <location>
        <position position="550"/>
    </location>
</feature>
<feature type="glycosylation site" description="N-linked (GlcNAc...) asparagine; by host" evidence="2">
    <location>
        <position position="560"/>
    </location>
</feature>
<feature type="glycosylation site" description="N-linked (GlcNAc...) asparagine; by host" evidence="2">
    <location>
        <position position="567"/>
    </location>
</feature>
<feature type="glycosylation site" description="N-linked (GlcNAc...) asparagine; by host" evidence="2">
    <location>
        <position position="703"/>
    </location>
</feature>
<feature type="glycosylation site" description="N-linked (GlcNAc...) asparagine; by host" evidence="2">
    <location>
        <position position="771"/>
    </location>
</feature>
<feature type="glycosylation site" description="N-linked (GlcNAc...) asparagine; by host" evidence="2">
    <location>
        <position position="778"/>
    </location>
</feature>
<feature type="glycosylation site" description="N-linked (GlcNAc...) asparagine; by host" evidence="2">
    <location>
        <position position="794"/>
    </location>
</feature>
<accession>P16899</accession>
<gene>
    <name type="primary">env</name>
</gene>
<organismHost>
    <name type="scientific">Ovis aries</name>
    <name type="common">Sheep</name>
    <dbReference type="NCBI Taxonomy" id="9940"/>
</organismHost>
<sequence>MASSKNMPSRITQKSMEPPLRETWQQVVQEMVMRKQRDEEEKQNLVTGKEKSWVSIDLLGTKQEGKRQKVNIWGPWEKWGIKIVWVMLWVIQLMLWGCLIWEMGKKHSCNAEEVIALVDDPGGFQKVKYVESVPVTCMTKNFTQWGCQPEGAYPDPDLEYRNISQDILEQVYKQEWPWNTYHWPLWQMENMRQWMKENEKEYTSRNNKTKEDIDALLAGKIRGRFCVPYPFALLKCEEWCWYPANINQETGHAQQIKINCTKAKAVSCTEQMPLAAVQRVYWEKEDEEGMKFMNIQACNESQLRCKTSPGGCVQGYPIPVGAEIIPESMKYLRGKKSPYGGIKDKNGELKLPLSVRVWVRMANLSGWVNGTPPYWSARIKGSTGINGTRWYGIGTLHHLGYNISSNPEKGLCNFTKELWIGGDRFQYQYKPSWNCSQNWTGYPVWHVFRYLDMTEHMTSRCVQRPLRHNITVGNGTITGNCSVTDWEGCNCTRSGNYLYNSTTGGLLVIICRQNSTITGIMGTNTNWTTMWGIYKNCSECKNSTLDRTDNGTLGTVNNINCSLPHYNESNKWTCAARNSKKKRDSLYIAGRDFWGRVKALYSCESNLGGLDGMMHQQMVLQKYQVIKVRAYTYGVVDMPKAYREKNMRNKRSTEISRPRKKRGIGLVIVLAIMAIIAAAGAGLGVANAVQQSYTRTAVQSLANATAAQQNVLEATYAMVQHVAKGVRILEARVARVEAIVDRMMLYHELDCWHYQHYCVTSTRTEVAQYVNWTRYKDNCTWQQWEEEIEQHEANLSLLLKEAALQVQIAQRDAQRIPDVWKALQEAFDWSGWFSWLKYIPWIVVCIVGVICFRLLMCVITMCLQAYRQVREIRYTRVTVVIEAPVDLEEKQREERDGSSGSENLEHEKRTSPRSFIQIWRATVQAWKTSPWGKGWKKILYMTLLPLLTLQIWMEETGWNGDKRCKKKKERVDCQDRESMPAIENEYVELS</sequence>
<name>ENV_OMVVS</name>
<proteinExistence type="inferred from homology"/>